<gene>
    <name evidence="1" type="primary">fabH</name>
    <name type="ordered locus">Dhaf_3820</name>
</gene>
<name>FABH_DESHD</name>
<dbReference type="EC" id="2.3.1.180" evidence="1"/>
<dbReference type="EMBL" id="CP001336">
    <property type="protein sequence ID" value="ACL21836.1"/>
    <property type="molecule type" value="Genomic_DNA"/>
</dbReference>
<dbReference type="RefSeq" id="WP_015944817.1">
    <property type="nucleotide sequence ID" value="NC_011830.1"/>
</dbReference>
<dbReference type="SMR" id="B8FRS6"/>
<dbReference type="KEGG" id="dhd:Dhaf_3820"/>
<dbReference type="HOGENOM" id="CLU_039592_3_1_9"/>
<dbReference type="UniPathway" id="UPA00094"/>
<dbReference type="Proteomes" id="UP000007726">
    <property type="component" value="Chromosome"/>
</dbReference>
<dbReference type="GO" id="GO:0005737">
    <property type="term" value="C:cytoplasm"/>
    <property type="evidence" value="ECO:0007669"/>
    <property type="project" value="UniProtKB-SubCell"/>
</dbReference>
<dbReference type="GO" id="GO:0004315">
    <property type="term" value="F:3-oxoacyl-[acyl-carrier-protein] synthase activity"/>
    <property type="evidence" value="ECO:0007669"/>
    <property type="project" value="InterPro"/>
</dbReference>
<dbReference type="GO" id="GO:0033818">
    <property type="term" value="F:beta-ketoacyl-acyl-carrier-protein synthase III activity"/>
    <property type="evidence" value="ECO:0007669"/>
    <property type="project" value="UniProtKB-UniRule"/>
</dbReference>
<dbReference type="GO" id="GO:0006633">
    <property type="term" value="P:fatty acid biosynthetic process"/>
    <property type="evidence" value="ECO:0007669"/>
    <property type="project" value="UniProtKB-UniRule"/>
</dbReference>
<dbReference type="GO" id="GO:0044550">
    <property type="term" value="P:secondary metabolite biosynthetic process"/>
    <property type="evidence" value="ECO:0007669"/>
    <property type="project" value="TreeGrafter"/>
</dbReference>
<dbReference type="CDD" id="cd00830">
    <property type="entry name" value="KAS_III"/>
    <property type="match status" value="1"/>
</dbReference>
<dbReference type="FunFam" id="3.40.47.10:FF:000004">
    <property type="entry name" value="3-oxoacyl-[acyl-carrier-protein] synthase 3"/>
    <property type="match status" value="1"/>
</dbReference>
<dbReference type="Gene3D" id="3.40.47.10">
    <property type="match status" value="1"/>
</dbReference>
<dbReference type="HAMAP" id="MF_01815">
    <property type="entry name" value="FabH"/>
    <property type="match status" value="1"/>
</dbReference>
<dbReference type="InterPro" id="IPR013747">
    <property type="entry name" value="ACP_syn_III_C"/>
</dbReference>
<dbReference type="InterPro" id="IPR013751">
    <property type="entry name" value="ACP_syn_III_N"/>
</dbReference>
<dbReference type="InterPro" id="IPR004655">
    <property type="entry name" value="FabH"/>
</dbReference>
<dbReference type="InterPro" id="IPR016039">
    <property type="entry name" value="Thiolase-like"/>
</dbReference>
<dbReference type="NCBIfam" id="TIGR00747">
    <property type="entry name" value="fabH"/>
    <property type="match status" value="1"/>
</dbReference>
<dbReference type="NCBIfam" id="NF006829">
    <property type="entry name" value="PRK09352.1"/>
    <property type="match status" value="1"/>
</dbReference>
<dbReference type="PANTHER" id="PTHR34069">
    <property type="entry name" value="3-OXOACYL-[ACYL-CARRIER-PROTEIN] SYNTHASE 3"/>
    <property type="match status" value="1"/>
</dbReference>
<dbReference type="PANTHER" id="PTHR34069:SF2">
    <property type="entry name" value="BETA-KETOACYL-[ACYL-CARRIER-PROTEIN] SYNTHASE III"/>
    <property type="match status" value="1"/>
</dbReference>
<dbReference type="Pfam" id="PF08545">
    <property type="entry name" value="ACP_syn_III"/>
    <property type="match status" value="1"/>
</dbReference>
<dbReference type="Pfam" id="PF08541">
    <property type="entry name" value="ACP_syn_III_C"/>
    <property type="match status" value="1"/>
</dbReference>
<dbReference type="SUPFAM" id="SSF53901">
    <property type="entry name" value="Thiolase-like"/>
    <property type="match status" value="1"/>
</dbReference>
<comment type="function">
    <text evidence="1">Catalyzes the condensation reaction of fatty acid synthesis by the addition to an acyl acceptor of two carbons from malonyl-ACP. Catalyzes the first condensation reaction which initiates fatty acid synthesis and may therefore play a role in governing the total rate of fatty acid production. Possesses both acetoacetyl-ACP synthase and acetyl transacylase activities. Its substrate specificity determines the biosynthesis of branched-chain and/or straight-chain of fatty acids.</text>
</comment>
<comment type="catalytic activity">
    <reaction evidence="1">
        <text>malonyl-[ACP] + acetyl-CoA + H(+) = 3-oxobutanoyl-[ACP] + CO2 + CoA</text>
        <dbReference type="Rhea" id="RHEA:12080"/>
        <dbReference type="Rhea" id="RHEA-COMP:9623"/>
        <dbReference type="Rhea" id="RHEA-COMP:9625"/>
        <dbReference type="ChEBI" id="CHEBI:15378"/>
        <dbReference type="ChEBI" id="CHEBI:16526"/>
        <dbReference type="ChEBI" id="CHEBI:57287"/>
        <dbReference type="ChEBI" id="CHEBI:57288"/>
        <dbReference type="ChEBI" id="CHEBI:78449"/>
        <dbReference type="ChEBI" id="CHEBI:78450"/>
        <dbReference type="EC" id="2.3.1.180"/>
    </reaction>
</comment>
<comment type="pathway">
    <text evidence="1">Lipid metabolism; fatty acid biosynthesis.</text>
</comment>
<comment type="subunit">
    <text evidence="1">Homodimer.</text>
</comment>
<comment type="subcellular location">
    <subcellularLocation>
        <location evidence="1">Cytoplasm</location>
    </subcellularLocation>
</comment>
<comment type="domain">
    <text evidence="1">The last Arg residue of the ACP-binding site is essential for the weak association between ACP/AcpP and FabH.</text>
</comment>
<comment type="similarity">
    <text evidence="1">Belongs to the thiolase-like superfamily. FabH family.</text>
</comment>
<feature type="chain" id="PRO_1000187864" description="Beta-ketoacyl-[acyl-carrier-protein] synthase III">
    <location>
        <begin position="1"/>
        <end position="331"/>
    </location>
</feature>
<feature type="region of interest" description="ACP-binding" evidence="1">
    <location>
        <begin position="254"/>
        <end position="258"/>
    </location>
</feature>
<feature type="active site" evidence="1">
    <location>
        <position position="113"/>
    </location>
</feature>
<feature type="active site" evidence="1">
    <location>
        <position position="253"/>
    </location>
</feature>
<feature type="active site" evidence="1">
    <location>
        <position position="283"/>
    </location>
</feature>
<evidence type="ECO:0000255" key="1">
    <source>
        <dbReference type="HAMAP-Rule" id="MF_01815"/>
    </source>
</evidence>
<sequence length="331" mass="34631">MVSVGIVGTGSYVPDKVLTNFDLEQMVDTNDQWIVSRTGIKERHIAAPETPVSELCYQAALRALEDAKLAPEELDLVIVATITPDFVFPATACLVAERLGAKKAAGFDLQAACTGFLYGVATAAQFIATGIYKNALVIGGETLSKILNWEDRGTCILFGDGAGAAVLQPVEEGYGFLGYDLGMDGAGGSLLTMPGGGSMHPASAETVAKKMHTIQMAGSEVFKFAVRIMGETALKALDKAGLGIGDVDCLIPHQANTRIVDAAVKRLGIDAGKVVVNLDRYGNMSAASIPVALDEAARSGRLNYGDIMVMVGFGGGLTWGAAVVKWSKRGV</sequence>
<reference key="1">
    <citation type="journal article" date="2012" name="BMC Microbiol.">
        <title>Genome sequence of Desulfitobacterium hafniense DCB-2, a Gram-positive anaerobe capable of dehalogenation and metal reduction.</title>
        <authorList>
            <person name="Kim S.H."/>
            <person name="Harzman C."/>
            <person name="Davis J.K."/>
            <person name="Hutcheson R."/>
            <person name="Broderick J.B."/>
            <person name="Marsh T.L."/>
            <person name="Tiedje J.M."/>
        </authorList>
    </citation>
    <scope>NUCLEOTIDE SEQUENCE [LARGE SCALE GENOMIC DNA]</scope>
    <source>
        <strain>DSM 10664 / DCB-2</strain>
    </source>
</reference>
<organism>
    <name type="scientific">Desulfitobacterium hafniense (strain DSM 10664 / DCB-2)</name>
    <dbReference type="NCBI Taxonomy" id="272564"/>
    <lineage>
        <taxon>Bacteria</taxon>
        <taxon>Bacillati</taxon>
        <taxon>Bacillota</taxon>
        <taxon>Clostridia</taxon>
        <taxon>Eubacteriales</taxon>
        <taxon>Desulfitobacteriaceae</taxon>
        <taxon>Desulfitobacterium</taxon>
    </lineage>
</organism>
<accession>B8FRS6</accession>
<protein>
    <recommendedName>
        <fullName evidence="1">Beta-ketoacyl-[acyl-carrier-protein] synthase III</fullName>
        <shortName evidence="1">Beta-ketoacyl-ACP synthase III</shortName>
        <shortName evidence="1">KAS III</shortName>
        <ecNumber evidence="1">2.3.1.180</ecNumber>
    </recommendedName>
    <alternativeName>
        <fullName evidence="1">3-oxoacyl-[acyl-carrier-protein] synthase 3</fullName>
    </alternativeName>
    <alternativeName>
        <fullName evidence="1">3-oxoacyl-[acyl-carrier-protein] synthase III</fullName>
    </alternativeName>
</protein>
<proteinExistence type="inferred from homology"/>
<keyword id="KW-0012">Acyltransferase</keyword>
<keyword id="KW-0963">Cytoplasm</keyword>
<keyword id="KW-0275">Fatty acid biosynthesis</keyword>
<keyword id="KW-0276">Fatty acid metabolism</keyword>
<keyword id="KW-0444">Lipid biosynthesis</keyword>
<keyword id="KW-0443">Lipid metabolism</keyword>
<keyword id="KW-0511">Multifunctional enzyme</keyword>
<keyword id="KW-0808">Transferase</keyword>